<reference key="1">
    <citation type="journal article" date="2008" name="J. Bacteriol.">
        <title>The pangenome structure of Escherichia coli: comparative genomic analysis of E. coli commensal and pathogenic isolates.</title>
        <authorList>
            <person name="Rasko D.A."/>
            <person name="Rosovitz M.J."/>
            <person name="Myers G.S.A."/>
            <person name="Mongodin E.F."/>
            <person name="Fricke W.F."/>
            <person name="Gajer P."/>
            <person name="Crabtree J."/>
            <person name="Sebaihia M."/>
            <person name="Thomson N.R."/>
            <person name="Chaudhuri R."/>
            <person name="Henderson I.R."/>
            <person name="Sperandio V."/>
            <person name="Ravel J."/>
        </authorList>
    </citation>
    <scope>NUCLEOTIDE SEQUENCE [LARGE SCALE GENOMIC DNA]</scope>
    <source>
        <strain>HS</strain>
    </source>
</reference>
<proteinExistence type="inferred from homology"/>
<name>UBIG_ECOHS</name>
<comment type="function">
    <text evidence="1">O-methyltransferase that catalyzes the 2 O-methylation steps in the ubiquinone biosynthetic pathway.</text>
</comment>
<comment type="catalytic activity">
    <reaction evidence="1">
        <text>a 3-demethylubiquinol + S-adenosyl-L-methionine = a ubiquinol + S-adenosyl-L-homocysteine + H(+)</text>
        <dbReference type="Rhea" id="RHEA:44380"/>
        <dbReference type="Rhea" id="RHEA-COMP:9566"/>
        <dbReference type="Rhea" id="RHEA-COMP:10914"/>
        <dbReference type="ChEBI" id="CHEBI:15378"/>
        <dbReference type="ChEBI" id="CHEBI:17976"/>
        <dbReference type="ChEBI" id="CHEBI:57856"/>
        <dbReference type="ChEBI" id="CHEBI:59789"/>
        <dbReference type="ChEBI" id="CHEBI:84422"/>
        <dbReference type="EC" id="2.1.1.64"/>
    </reaction>
</comment>
<comment type="catalytic activity">
    <reaction evidence="1">
        <text>a 3-(all-trans-polyprenyl)benzene-1,2-diol + S-adenosyl-L-methionine = a 2-methoxy-6-(all-trans-polyprenyl)phenol + S-adenosyl-L-homocysteine + H(+)</text>
        <dbReference type="Rhea" id="RHEA:31411"/>
        <dbReference type="Rhea" id="RHEA-COMP:9550"/>
        <dbReference type="Rhea" id="RHEA-COMP:9551"/>
        <dbReference type="ChEBI" id="CHEBI:15378"/>
        <dbReference type="ChEBI" id="CHEBI:57856"/>
        <dbReference type="ChEBI" id="CHEBI:59789"/>
        <dbReference type="ChEBI" id="CHEBI:62729"/>
        <dbReference type="ChEBI" id="CHEBI:62731"/>
        <dbReference type="EC" id="2.1.1.222"/>
    </reaction>
</comment>
<comment type="pathway">
    <text evidence="1">Cofactor biosynthesis; ubiquinone biosynthesis.</text>
</comment>
<comment type="similarity">
    <text evidence="1">Belongs to the methyltransferase superfamily. UbiG/COQ3 family.</text>
</comment>
<gene>
    <name evidence="1" type="primary">ubiG</name>
    <name type="ordered locus">EcHS_A2372</name>
</gene>
<organism>
    <name type="scientific">Escherichia coli O9:H4 (strain HS)</name>
    <dbReference type="NCBI Taxonomy" id="331112"/>
    <lineage>
        <taxon>Bacteria</taxon>
        <taxon>Pseudomonadati</taxon>
        <taxon>Pseudomonadota</taxon>
        <taxon>Gammaproteobacteria</taxon>
        <taxon>Enterobacterales</taxon>
        <taxon>Enterobacteriaceae</taxon>
        <taxon>Escherichia</taxon>
    </lineage>
</organism>
<keyword id="KW-0489">Methyltransferase</keyword>
<keyword id="KW-0949">S-adenosyl-L-methionine</keyword>
<keyword id="KW-0808">Transferase</keyword>
<keyword id="KW-0831">Ubiquinone biosynthesis</keyword>
<dbReference type="EC" id="2.1.1.222" evidence="1"/>
<dbReference type="EC" id="2.1.1.64" evidence="1"/>
<dbReference type="EMBL" id="CP000802">
    <property type="protein sequence ID" value="ABV06650.1"/>
    <property type="molecule type" value="Genomic_DNA"/>
</dbReference>
<dbReference type="RefSeq" id="WP_000990763.1">
    <property type="nucleotide sequence ID" value="NC_009800.1"/>
</dbReference>
<dbReference type="SMR" id="A8A296"/>
<dbReference type="KEGG" id="ecx:EcHS_A2372"/>
<dbReference type="HOGENOM" id="CLU_042432_5_0_6"/>
<dbReference type="UniPathway" id="UPA00232"/>
<dbReference type="GO" id="GO:0102208">
    <property type="term" value="F:2-polyprenyl-6-hydroxyphenol methylase activity"/>
    <property type="evidence" value="ECO:0007669"/>
    <property type="project" value="UniProtKB-EC"/>
</dbReference>
<dbReference type="GO" id="GO:0061542">
    <property type="term" value="F:3-demethylubiquinol 3-O-methyltransferase activity"/>
    <property type="evidence" value="ECO:0007669"/>
    <property type="project" value="UniProtKB-UniRule"/>
</dbReference>
<dbReference type="GO" id="GO:0010420">
    <property type="term" value="F:polyprenyldihydroxybenzoate methyltransferase activity"/>
    <property type="evidence" value="ECO:0007669"/>
    <property type="project" value="InterPro"/>
</dbReference>
<dbReference type="GO" id="GO:0032259">
    <property type="term" value="P:methylation"/>
    <property type="evidence" value="ECO:0007669"/>
    <property type="project" value="UniProtKB-KW"/>
</dbReference>
<dbReference type="CDD" id="cd02440">
    <property type="entry name" value="AdoMet_MTases"/>
    <property type="match status" value="1"/>
</dbReference>
<dbReference type="FunFam" id="3.40.50.150:FF:000028">
    <property type="entry name" value="Ubiquinone biosynthesis O-methyltransferase"/>
    <property type="match status" value="1"/>
</dbReference>
<dbReference type="Gene3D" id="3.40.50.150">
    <property type="entry name" value="Vaccinia Virus protein VP39"/>
    <property type="match status" value="1"/>
</dbReference>
<dbReference type="HAMAP" id="MF_00472">
    <property type="entry name" value="UbiG"/>
    <property type="match status" value="1"/>
</dbReference>
<dbReference type="InterPro" id="IPR029063">
    <property type="entry name" value="SAM-dependent_MTases_sf"/>
</dbReference>
<dbReference type="InterPro" id="IPR010233">
    <property type="entry name" value="UbiG_MeTrfase"/>
</dbReference>
<dbReference type="NCBIfam" id="TIGR01983">
    <property type="entry name" value="UbiG"/>
    <property type="match status" value="1"/>
</dbReference>
<dbReference type="PANTHER" id="PTHR43464">
    <property type="entry name" value="METHYLTRANSFERASE"/>
    <property type="match status" value="1"/>
</dbReference>
<dbReference type="PANTHER" id="PTHR43464:SF19">
    <property type="entry name" value="UBIQUINONE BIOSYNTHESIS O-METHYLTRANSFERASE, MITOCHONDRIAL"/>
    <property type="match status" value="1"/>
</dbReference>
<dbReference type="Pfam" id="PF13489">
    <property type="entry name" value="Methyltransf_23"/>
    <property type="match status" value="1"/>
</dbReference>
<dbReference type="SUPFAM" id="SSF53335">
    <property type="entry name" value="S-adenosyl-L-methionine-dependent methyltransferases"/>
    <property type="match status" value="1"/>
</dbReference>
<feature type="chain" id="PRO_1000060386" description="Ubiquinone biosynthesis O-methyltransferase">
    <location>
        <begin position="1"/>
        <end position="240"/>
    </location>
</feature>
<feature type="binding site" evidence="1">
    <location>
        <position position="44"/>
    </location>
    <ligand>
        <name>S-adenosyl-L-methionine</name>
        <dbReference type="ChEBI" id="CHEBI:59789"/>
    </ligand>
</feature>
<feature type="binding site" evidence="1">
    <location>
        <position position="64"/>
    </location>
    <ligand>
        <name>S-adenosyl-L-methionine</name>
        <dbReference type="ChEBI" id="CHEBI:59789"/>
    </ligand>
</feature>
<feature type="binding site" evidence="1">
    <location>
        <position position="85"/>
    </location>
    <ligand>
        <name>S-adenosyl-L-methionine</name>
        <dbReference type="ChEBI" id="CHEBI:59789"/>
    </ligand>
</feature>
<feature type="binding site" evidence="1">
    <location>
        <position position="129"/>
    </location>
    <ligand>
        <name>S-adenosyl-L-methionine</name>
        <dbReference type="ChEBI" id="CHEBI:59789"/>
    </ligand>
</feature>
<sequence length="240" mass="26529">MNAEKSPVNHNVDHEEIAKFEAVASRWWDLEGEFKPLHRINPLRLGYIAERAGGLFGKKVLDVGCGGGILAESMAREGATVTGLDMGFEPLQVAKLHALESGIQVDYVQETVEEHAAKHAGQYDVVTCMEMLEHVPDPQSVVRACAQLVKPGGDVFFSTLNRNGKSWLMAVVGAEHILRMVPKGTHDVKKFIKPAELLGWVDQTSLKERHITGLHYNPITNTFKLGPGVDVNYMLHTQNK</sequence>
<accession>A8A296</accession>
<evidence type="ECO:0000255" key="1">
    <source>
        <dbReference type="HAMAP-Rule" id="MF_00472"/>
    </source>
</evidence>
<protein>
    <recommendedName>
        <fullName evidence="1">Ubiquinone biosynthesis O-methyltransferase</fullName>
    </recommendedName>
    <alternativeName>
        <fullName evidence="1">2-octaprenyl-6-hydroxyphenol methylase</fullName>
        <ecNumber evidence="1">2.1.1.222</ecNumber>
    </alternativeName>
    <alternativeName>
        <fullName evidence="1">3-demethylubiquinone-8 3-O-methyltransferase</fullName>
        <ecNumber evidence="1">2.1.1.64</ecNumber>
    </alternativeName>
</protein>